<keyword id="KW-0235">DNA replication</keyword>
<keyword id="KW-1048">Host nucleus</keyword>
<keyword id="KW-0945">Host-virus interaction</keyword>
<keyword id="KW-0479">Metal-binding</keyword>
<keyword id="KW-1185">Reference proteome</keyword>
<keyword id="KW-0808">Transferase</keyword>
<keyword id="KW-0862">Zinc</keyword>
<keyword id="KW-0863">Zinc-finger</keyword>
<sequence>MTLVLFATEYDSAHIVANVLSQTPTDHCVFPLLVKHQVSRRVYFCLQTQKCSDSRRVAPVFAVNNETLQLSRYLAARQPIPLSALIASLDEAETQPLYRHLFRTPVLSPEHGGEVREFKHLVYFHHAAVLRHLNQVFLCPTSPSWFISVFGHTEGQVLLTMAYYLFEGQYSTISTVEEYVRSFCTRDLGTIIPTHASMGEFARLLLGSPFRQRVSAFVAYAVARNRRDYTELEQVDTQINAFRERARLPDTVCVHYVYLAYRTALARARLLEYRRVVAYDADAAPEAQCTREPGFLGRRLSTELLDVMQKYFSLDNFLHDYVETHLLRLDESPHSATSPHGLGLAGYGGRIDGTHLAGFFGTSTQLARQLERINTLSESVFSPLERSLSGLLRLCASLRTAQTYTTGTLTRYSQRRYLLPEPALAPLLERPLPVYRVHLPNDQHVFCAVASETWHRSLFPRDLLRHVPDSRFSDEALTETVWLHDDDVASTSPETQFYYTRHEVFNERLPVFNFVADFDLRLRDGVSGLARHTVFELCRGLRRVWMTVWASLFGYTHPDRHPVYFFKSACPPNSVPVDAAGAPFDDDDYLDYRDERDTEEDEDGKEDKNNVPDNGVFQKTTSSVDTSPPYCRCKGKLGLRIITPFPACTVAVHPSVLRAVAQVLNHAVCLDAELHTLLDPISHPESSLDTGIYHHGRSVRLPYMYKMDQDDGYFMHRRLLPLFIVPDAYREHPLGFVRAQLDLRNLLHHHPPHDLPALPLSPPPRVILSVRDKICPSTEANFIETRSLNVTRYRRRGLTEVLAYHLYGGDGATAAAISDTDLQRLVVTRVWPPLLEHLTQHYEPHVSEQFTAPHVLLFQPHGACCVAVKRRDGARTRDFRCLNYTHRNPQETVQVFIDLRTEHSYALWASLWSRCFTKKCHSNAKNVHISIKIRPPDAPVPPATAV</sequence>
<protein>
    <recommendedName>
        <fullName evidence="1">DNA primase</fullName>
        <ecNumber evidence="1">2.7.7.-</ecNumber>
    </recommendedName>
</protein>
<feature type="chain" id="PRO_0000116115" description="DNA primase">
    <location>
        <begin position="1"/>
        <end position="946"/>
    </location>
</feature>
<feature type="zinc finger region" description="CHC2-type" evidence="1">
    <location>
        <begin position="881"/>
        <end position="920"/>
    </location>
</feature>
<feature type="region of interest" description="Disordered" evidence="2">
    <location>
        <begin position="596"/>
        <end position="626"/>
    </location>
</feature>
<feature type="compositionally biased region" description="Polar residues" evidence="2">
    <location>
        <begin position="617"/>
        <end position="626"/>
    </location>
</feature>
<feature type="site" description="Essential for primase activity" evidence="1">
    <location>
        <position position="517"/>
    </location>
</feature>
<feature type="site" description="Essential for primase activity" evidence="1">
    <location>
        <position position="519"/>
    </location>
</feature>
<accession>P17149</accession>
<accession>Q7M6M2</accession>
<organism>
    <name type="scientific">Human cytomegalovirus (strain AD169)</name>
    <name type="common">HHV-5</name>
    <name type="synonym">Human herpesvirus 5</name>
    <dbReference type="NCBI Taxonomy" id="10360"/>
    <lineage>
        <taxon>Viruses</taxon>
        <taxon>Duplodnaviria</taxon>
        <taxon>Heunggongvirae</taxon>
        <taxon>Peploviricota</taxon>
        <taxon>Herviviricetes</taxon>
        <taxon>Herpesvirales</taxon>
        <taxon>Orthoherpesviridae</taxon>
        <taxon>Betaherpesvirinae</taxon>
        <taxon>Cytomegalovirus</taxon>
        <taxon>Cytomegalovirus humanbeta5</taxon>
        <taxon>Human cytomegalovirus</taxon>
    </lineage>
</organism>
<comment type="function">
    <text evidence="1">Essential component of the helicase/primase complex. Unwinds the DNA at the replication forks and generates single-stranded DNA for both leading and lagging strand synthesis. The primase initiates primer synthesis and thereby produces large amount of short RNA primers on the lagging strand that the polymerase elongates using dNTPs.</text>
</comment>
<comment type="subunit">
    <text evidence="1 3">Associates with the helicase and the primase-associated factor to form the helicase-primase factor (By similarity).</text>
</comment>
<comment type="subcellular location">
    <subcellularLocation>
        <location evidence="1">Host nucleus</location>
    </subcellularLocation>
    <text evidence="1">Requires the presence of the primase associated factor to properly localize in the host cell nucleus.</text>
</comment>
<comment type="similarity">
    <text evidence="1">Belongs to the herpesviridae DNA primase family.</text>
</comment>
<comment type="sequence caution" evidence="4">
    <conflict type="erroneous initiation">
        <sequence resource="EMBL-CDS" id="CAA35386"/>
    </conflict>
</comment>
<reference key="1">
    <citation type="journal article" date="1990" name="Curr. Top. Microbiol. Immunol.">
        <title>Analysis of the protein-coding content of the sequence of human cytomegalovirus strain AD169.</title>
        <authorList>
            <person name="Chee M.S."/>
            <person name="Bankier A.T."/>
            <person name="Beck S."/>
            <person name="Bohni R."/>
            <person name="Brown C.M."/>
            <person name="Cerny R."/>
            <person name="Horsnell T."/>
            <person name="Hutchison C.A. III"/>
            <person name="Kouzarides T."/>
            <person name="Martignetti J.A."/>
            <person name="Preddie E."/>
            <person name="Satchwell S.C."/>
            <person name="Tomlinson P."/>
            <person name="Weston K.M."/>
            <person name="Barrell B.G."/>
        </authorList>
    </citation>
    <scope>NUCLEOTIDE SEQUENCE [LARGE SCALE GENOMIC DNA]</scope>
</reference>
<reference key="2">
    <citation type="journal article" date="2003" name="J. Gen. Virol.">
        <title>The human cytomegalovirus genome revisited: comparison with the chimpanzee cytomegalovirus genome.</title>
        <authorList>
            <person name="Davison A.J."/>
            <person name="Dolan A."/>
            <person name="Akter P."/>
            <person name="Addison C."/>
            <person name="Dargan D.J."/>
            <person name="Alcendor D.J."/>
            <person name="McGeoch D.J."/>
            <person name="Hayward G.S."/>
        </authorList>
    </citation>
    <scope>GENOME REANNOTATION</scope>
</reference>
<reference key="3">
    <citation type="journal article" date="2003" name="J. Gen. Virol.">
        <authorList>
            <person name="Davison A.J."/>
            <person name="Dolan A."/>
            <person name="Akter P."/>
            <person name="Addison C."/>
            <person name="Dargan D.J."/>
            <person name="Alcendor D.J."/>
            <person name="McGeoch D.J."/>
            <person name="Hayward G.S."/>
        </authorList>
    </citation>
    <scope>ERRATUM OF PUBMED:12533697</scope>
</reference>
<reference key="4">
    <citation type="journal article" date="2002" name="Virus Res.">
        <title>Interactions between human cytomegalovirus helicase-primase proteins.</title>
        <authorList>
            <person name="McMahon T.P."/>
            <person name="Anders D.G."/>
        </authorList>
    </citation>
    <scope>INTERACTION WITH UL102 AND UL105</scope>
</reference>
<gene>
    <name type="primary">UL70</name>
</gene>
<dbReference type="EC" id="2.7.7.-" evidence="1"/>
<dbReference type="EMBL" id="X17403">
    <property type="protein sequence ID" value="CAA35386.1"/>
    <property type="status" value="ALT_INIT"/>
    <property type="molecule type" value="Genomic_DNA"/>
</dbReference>
<dbReference type="EMBL" id="BK000394">
    <property type="protein sequence ID" value="DAA00166.1"/>
    <property type="molecule type" value="Genomic_DNA"/>
</dbReference>
<dbReference type="PIR" id="S09834">
    <property type="entry name" value="S09834"/>
</dbReference>
<dbReference type="MINT" id="P17149"/>
<dbReference type="Proteomes" id="UP000008991">
    <property type="component" value="Segment"/>
</dbReference>
<dbReference type="Proteomes" id="UP000008992">
    <property type="component" value="Segment"/>
</dbReference>
<dbReference type="GO" id="GO:0042025">
    <property type="term" value="C:host cell nucleus"/>
    <property type="evidence" value="ECO:0007669"/>
    <property type="project" value="UniProtKB-SubCell"/>
</dbReference>
<dbReference type="GO" id="GO:0003899">
    <property type="term" value="F:DNA-directed RNA polymerase activity"/>
    <property type="evidence" value="ECO:0007669"/>
    <property type="project" value="InterPro"/>
</dbReference>
<dbReference type="GO" id="GO:0008270">
    <property type="term" value="F:zinc ion binding"/>
    <property type="evidence" value="ECO:0007669"/>
    <property type="project" value="UniProtKB-KW"/>
</dbReference>
<dbReference type="GO" id="GO:0039686">
    <property type="term" value="P:bidirectional double-stranded viral DNA replication"/>
    <property type="evidence" value="ECO:0000314"/>
    <property type="project" value="UniProtKB"/>
</dbReference>
<dbReference type="GO" id="GO:0006260">
    <property type="term" value="P:DNA replication"/>
    <property type="evidence" value="ECO:0007669"/>
    <property type="project" value="UniProtKB-KW"/>
</dbReference>
<dbReference type="HAMAP" id="MF_04011">
    <property type="entry name" value="HSV_PRIM"/>
    <property type="match status" value="1"/>
</dbReference>
<dbReference type="InterPro" id="IPR033685">
    <property type="entry name" value="HSV_PRIM"/>
</dbReference>
<dbReference type="Pfam" id="PF03121">
    <property type="entry name" value="Herpes_UL52"/>
    <property type="match status" value="1"/>
</dbReference>
<name>PRIM_HCMVA</name>
<proteinExistence type="evidence at protein level"/>
<organismHost>
    <name type="scientific">Homo sapiens</name>
    <name type="common">Human</name>
    <dbReference type="NCBI Taxonomy" id="9606"/>
</organismHost>
<evidence type="ECO:0000255" key="1">
    <source>
        <dbReference type="HAMAP-Rule" id="MF_04011"/>
    </source>
</evidence>
<evidence type="ECO:0000256" key="2">
    <source>
        <dbReference type="SAM" id="MobiDB-lite"/>
    </source>
</evidence>
<evidence type="ECO:0000269" key="3">
    <source>
    </source>
</evidence>
<evidence type="ECO:0000305" key="4"/>